<organism>
    <name type="scientific">Saccharomyces cerevisiae (strain ATCC 204508 / S288c)</name>
    <name type="common">Baker's yeast</name>
    <dbReference type="NCBI Taxonomy" id="559292"/>
    <lineage>
        <taxon>Eukaryota</taxon>
        <taxon>Fungi</taxon>
        <taxon>Dikarya</taxon>
        <taxon>Ascomycota</taxon>
        <taxon>Saccharomycotina</taxon>
        <taxon>Saccharomycetes</taxon>
        <taxon>Saccharomycetales</taxon>
        <taxon>Saccharomycetaceae</taxon>
        <taxon>Saccharomyces</taxon>
    </lineage>
</organism>
<dbReference type="EMBL" id="X78160">
    <property type="protein sequence ID" value="CAA55024.1"/>
    <property type="molecule type" value="Genomic_DNA"/>
</dbReference>
<dbReference type="EMBL" id="AY949845">
    <property type="protein sequence ID" value="AAX47294.1"/>
    <property type="molecule type" value="Genomic_DNA"/>
</dbReference>
<dbReference type="EMBL" id="AY949846">
    <property type="protein sequence ID" value="AAX47295.1"/>
    <property type="molecule type" value="Genomic_DNA"/>
</dbReference>
<dbReference type="EMBL" id="AY949847">
    <property type="protein sequence ID" value="AAX47296.1"/>
    <property type="molecule type" value="Genomic_DNA"/>
</dbReference>
<dbReference type="EMBL" id="AY949848">
    <property type="protein sequence ID" value="AAX47297.1"/>
    <property type="molecule type" value="Genomic_DNA"/>
</dbReference>
<dbReference type="EMBL" id="EF670005">
    <property type="protein sequence ID" value="ABS87371.1"/>
    <property type="molecule type" value="Genomic_DNA"/>
</dbReference>
<dbReference type="EMBL" id="L28920">
    <property type="protein sequence ID" value="AAC09499.1"/>
    <property type="status" value="ALT_SEQ"/>
    <property type="molecule type" value="Genomic_DNA"/>
</dbReference>
<dbReference type="EMBL" id="BK006935">
    <property type="protein sequence ID" value="DAA07007.1"/>
    <property type="molecule type" value="Genomic_DNA"/>
</dbReference>
<dbReference type="PIR" id="S53465">
    <property type="entry name" value="S53465"/>
</dbReference>
<dbReference type="RefSeq" id="NP_009424.1">
    <property type="nucleotide sequence ID" value="NM_001178230.1"/>
</dbReference>
<dbReference type="PDB" id="4LHL">
    <property type="method" value="X-ray"/>
    <property type="resolution" value="1.43 A"/>
    <property type="chains" value="A=23-271"/>
</dbReference>
<dbReference type="PDB" id="4LHN">
    <property type="method" value="X-ray"/>
    <property type="resolution" value="2.12 A"/>
    <property type="chains" value="A=23-271"/>
</dbReference>
<dbReference type="PDBsum" id="4LHL"/>
<dbReference type="PDBsum" id="4LHN"/>
<dbReference type="SMR" id="P32768"/>
<dbReference type="BioGRID" id="31813">
    <property type="interactions" value="61"/>
</dbReference>
<dbReference type="FunCoup" id="P32768">
    <property type="interactions" value="988"/>
</dbReference>
<dbReference type="STRING" id="4932.YAR050W"/>
<dbReference type="UniLectin" id="P32768"/>
<dbReference type="GlyCosmos" id="P32768">
    <property type="glycosylation" value="14 sites, No reported glycans"/>
</dbReference>
<dbReference type="GlyGen" id="P32768">
    <property type="glycosylation" value="14 sites"/>
</dbReference>
<dbReference type="PaxDb" id="4932-YAR050W"/>
<dbReference type="EnsemblFungi" id="YAR050W_mRNA">
    <property type="protein sequence ID" value="YAR050W"/>
    <property type="gene ID" value="YAR050W"/>
</dbReference>
<dbReference type="GeneID" id="851289"/>
<dbReference type="KEGG" id="sce:YAR050W"/>
<dbReference type="AGR" id="SGD:S000000084"/>
<dbReference type="SGD" id="S000000084">
    <property type="gene designation" value="FLO1"/>
</dbReference>
<dbReference type="VEuPathDB" id="FungiDB:YAR050W"/>
<dbReference type="eggNOG" id="ENOG502QPQC">
    <property type="taxonomic scope" value="Eukaryota"/>
</dbReference>
<dbReference type="GeneTree" id="ENSGT00940000176342"/>
<dbReference type="HOGENOM" id="CLU_006076_0_0_1"/>
<dbReference type="InParanoid" id="P32768"/>
<dbReference type="OMA" id="TTIYSTW"/>
<dbReference type="OrthoDB" id="4070698at2759"/>
<dbReference type="BioCyc" id="YEAST:G3O-28884-MONOMER"/>
<dbReference type="BioGRID-ORCS" id="851289">
    <property type="hits" value="0 hits in 10 CRISPR screens"/>
</dbReference>
<dbReference type="EvolutionaryTrace" id="P32768"/>
<dbReference type="PRO" id="PR:P32768"/>
<dbReference type="Proteomes" id="UP000002311">
    <property type="component" value="Chromosome I"/>
</dbReference>
<dbReference type="RNAct" id="P32768">
    <property type="molecule type" value="protein"/>
</dbReference>
<dbReference type="GO" id="GO:0071944">
    <property type="term" value="C:cell periphery"/>
    <property type="evidence" value="ECO:0007005"/>
    <property type="project" value="SGD"/>
</dbReference>
<dbReference type="GO" id="GO:0005576">
    <property type="term" value="C:extracellular region"/>
    <property type="evidence" value="ECO:0007669"/>
    <property type="project" value="UniProtKB-KW"/>
</dbReference>
<dbReference type="GO" id="GO:0009277">
    <property type="term" value="C:fungal-type cell wall"/>
    <property type="evidence" value="ECO:0000314"/>
    <property type="project" value="SGD"/>
</dbReference>
<dbReference type="GO" id="GO:0005886">
    <property type="term" value="C:plasma membrane"/>
    <property type="evidence" value="ECO:0007669"/>
    <property type="project" value="UniProtKB-SubCell"/>
</dbReference>
<dbReference type="GO" id="GO:0098552">
    <property type="term" value="C:side of membrane"/>
    <property type="evidence" value="ECO:0007669"/>
    <property type="project" value="UniProtKB-KW"/>
</dbReference>
<dbReference type="GO" id="GO:0005537">
    <property type="term" value="F:D-mannose binding"/>
    <property type="evidence" value="ECO:0000315"/>
    <property type="project" value="SGD"/>
</dbReference>
<dbReference type="GO" id="GO:0000128">
    <property type="term" value="P:flocculation"/>
    <property type="evidence" value="ECO:0000315"/>
    <property type="project" value="SGD"/>
</dbReference>
<dbReference type="Gene3D" id="2.60.120.1560">
    <property type="match status" value="1"/>
</dbReference>
<dbReference type="Gene3D" id="6.20.60.20">
    <property type="match status" value="1"/>
</dbReference>
<dbReference type="InterPro" id="IPR001389">
    <property type="entry name" value="Flocculin"/>
</dbReference>
<dbReference type="InterPro" id="IPR037524">
    <property type="entry name" value="PA14/GLEYA"/>
</dbReference>
<dbReference type="InterPro" id="IPR011658">
    <property type="entry name" value="PA14_dom"/>
</dbReference>
<dbReference type="Pfam" id="PF00624">
    <property type="entry name" value="Flocculin"/>
    <property type="match status" value="18"/>
</dbReference>
<dbReference type="Pfam" id="PF07691">
    <property type="entry name" value="PA14"/>
    <property type="match status" value="1"/>
</dbReference>
<dbReference type="SMART" id="SM00758">
    <property type="entry name" value="PA14"/>
    <property type="match status" value="1"/>
</dbReference>
<dbReference type="PROSITE" id="PS51820">
    <property type="entry name" value="PA14"/>
    <property type="match status" value="1"/>
</dbReference>
<accession>P32768</accession>
<accession>A7U4Y7</accession>
<accession>D6VPN7</accession>
<accession>Q58HH7</accession>
<accession>Q58HH8</accession>
<accession>Q58HH9</accession>
<accession>Q58HI0</accession>
<name>FLO1_YEAST</name>
<sequence>MTMPHRYMFLAVFTLLALTSVASGATEACLPAGQRKSGMNINFYQYSLKDSSTYSNAAYMAYGYASKTKLGSVGGQTDISIDYNIPCVSSSGTFPCPQEDSYGNWGCKGMGACSNSQGIAYWSTDLFGFYTTPTNVTLEMTGYFLPPQTGSYTFKFATVDDSAILSVGGATAFNCCAQQQPPITSTNFTIDGIKPWGGSLPPNIEGTVYMYAGYYYPMKVVYSNAVSWGTLPISVTLPDGTTVSDDFEGYVYSFDDDLSQSNCTVPDPSNYAVSTTTTTTEPWTGTFTSTSTEMTTVTGTNGVPTDETVIVIRTPTTASTIITTTEPWNSTFTSTSTELTTVTGTNGVRTDETIIVIRTPTTATTAITTTEPWNSTFTSTSTELTTVTGTNGLPTDETIIVIRTPTTATTAMTTTQPWNDTFTSTSTELTTVTGTNGLPTDETIIVIRTPTTATTAMTTTQPWNDTFTSTSTELTTVTGTNGLPTDETIIVIRTPTTATTAMTTTQPWNDTFTSTSTEITTVTGTNGLPTDETIIVIRTPTTATTAMTTPQPWNDTFTSTSTEMTTVTGTNGLPTDETIIVIRTPTTATTAITTTEPWNSTFTSTSTEMTTVTGTNGLPTDETIIVIRTPTTATTAITTTQPWNDTFTSTSTEMTTVTGTNGLPTDETIIVIRTPTTATTAMTTTQPWNDTFTSTSTEITTVTGTTGLPTDETIIVIRTPTTATTAMTTTQPWNDTFTSTSTEMTTVTGTNGVPTDETVIVIRTPTSEGLISTTTEPWTGTFTSTSTEMTTVTGTNGQPTDETVIVIRTPTSEGLVTTTTEPWTGTFTSTSTEMTTITGTNGVPTDETVIVIRTPTSEGLISTTTEPWTGTFTSTSTEMTTITGTNGQPTDETVIVIRTPTSEGLISTTTEPWTGTFTSTSTEMTHVTGTNGVPTDETVIVIRTPTSEGLISTTTEPWTGTFTSTSTEVTTITGTNGQPTDETVIVIRTPTSEGLISTTTEPWTGTFTSTSTEMTTVTGTNGQPTDETVIVIRTPTSEGLVTTTTEPWTGTFTSTSTEMSTVTGTNGLPTDETVIVVKTPTTAISSSLSSSSSGQITSSITSSRPIITPFYPSNGTSVISSSVISSSVTSSLFTSSPVISSSVISSSTTTSTSIFSESSKSSVIPTSSSTSGSSESETSSAGSVSSSSFISSESSKSPTYSSSSLPLVTSATTSQETASSLPPATTTKTSEQTTLVTVTSCESHVCTESISPAIVSTATVTVSGVTTEYTTWCPISTTETTKQTKGTTEQTTETTKQTTVVTISSCESDVCSKTASPAIVSTSTATINGVTTEYTTWCPISTTESRQQTTLVTVTSCESGVCSETASPAIVSTATATVNDVVTVYPTWRPQTANEESVSSKMNSATGETTTNTLAAETTTNTVAAETITNTGAAETKTVVTSSLSRSNHAETQTASATDVIGHSSSVVSVSETGNTKSLTSSGLSTMSQQPRSTPASSMVGYSTASLEISTYAGSANSLLAGSGLSVFIASLLLAII</sequence>
<keyword id="KW-0002">3D-structure</keyword>
<keyword id="KW-1003">Cell membrane</keyword>
<keyword id="KW-0134">Cell wall</keyword>
<keyword id="KW-0325">Glycoprotein</keyword>
<keyword id="KW-0336">GPI-anchor</keyword>
<keyword id="KW-0449">Lipoprotein</keyword>
<keyword id="KW-0472">Membrane</keyword>
<keyword id="KW-1185">Reference proteome</keyword>
<keyword id="KW-0677">Repeat</keyword>
<keyword id="KW-0964">Secreted</keyword>
<keyword id="KW-0732">Signal</keyword>
<feature type="signal peptide" evidence="1">
    <location>
        <begin position="1"/>
        <end position="24"/>
    </location>
</feature>
<feature type="chain" id="PRO_0000021273" description="Flocculation protein FLO1">
    <location>
        <begin position="25"/>
        <end position="1514"/>
    </location>
</feature>
<feature type="propeptide" id="PRO_0000021274" description="Removed in mature form" evidence="1">
    <location>
        <begin position="1515"/>
        <end position="1537"/>
    </location>
</feature>
<feature type="domain" description="PA14" evidence="2">
    <location>
        <begin position="74"/>
        <end position="249"/>
    </location>
</feature>
<feature type="repeat" description="1-1">
    <location>
        <begin position="278"/>
        <end position="322"/>
    </location>
</feature>
<feature type="repeat" description="1-2">
    <location>
        <begin position="323"/>
        <end position="367"/>
    </location>
</feature>
<feature type="repeat" description="1-3">
    <location>
        <begin position="368"/>
        <end position="412"/>
    </location>
</feature>
<feature type="repeat" description="1-4">
    <location>
        <begin position="413"/>
        <end position="457"/>
    </location>
</feature>
<feature type="repeat" description="1-5">
    <location>
        <begin position="458"/>
        <end position="502"/>
    </location>
</feature>
<feature type="repeat" description="1-6">
    <location>
        <begin position="503"/>
        <end position="547"/>
    </location>
</feature>
<feature type="repeat" description="1-7">
    <location>
        <begin position="548"/>
        <end position="592"/>
    </location>
</feature>
<feature type="repeat" description="1-8">
    <location>
        <begin position="593"/>
        <end position="637"/>
    </location>
</feature>
<feature type="repeat" description="1-9">
    <location>
        <begin position="638"/>
        <end position="682"/>
    </location>
</feature>
<feature type="repeat" description="1-10">
    <location>
        <begin position="683"/>
        <end position="727"/>
    </location>
</feature>
<feature type="repeat" description="1-11">
    <location>
        <begin position="728"/>
        <end position="772"/>
    </location>
</feature>
<feature type="repeat" description="1-12">
    <location>
        <begin position="773"/>
        <end position="817"/>
    </location>
</feature>
<feature type="repeat" description="1-13">
    <location>
        <begin position="818"/>
        <end position="862"/>
    </location>
</feature>
<feature type="repeat" description="1-14">
    <location>
        <begin position="863"/>
        <end position="907"/>
    </location>
</feature>
<feature type="repeat" description="1-15">
    <location>
        <begin position="908"/>
        <end position="952"/>
    </location>
</feature>
<feature type="repeat" description="1-16">
    <location>
        <begin position="953"/>
        <end position="997"/>
    </location>
</feature>
<feature type="repeat" description="1-17">
    <location>
        <begin position="998"/>
        <end position="1042"/>
    </location>
</feature>
<feature type="repeat" description="1-18">
    <location>
        <begin position="1043"/>
        <end position="1087"/>
    </location>
</feature>
<feature type="repeat" description="2-1">
    <location>
        <begin position="1118"/>
        <end position="1137"/>
    </location>
</feature>
<feature type="repeat" description="2-2">
    <location>
        <begin position="1138"/>
        <end position="1157"/>
    </location>
</feature>
<feature type="repeat" description="3-1">
    <location>
        <begin position="1226"/>
        <end position="1276"/>
    </location>
</feature>
<feature type="repeat" description="3-2">
    <location>
        <begin position="1291"/>
        <end position="1341"/>
    </location>
</feature>
<feature type="repeat" description="3-3">
    <location>
        <begin position="1342"/>
        <end position="1392"/>
    </location>
</feature>
<feature type="repeat" description="4-1">
    <location>
        <begin position="1408"/>
        <end position="1416"/>
    </location>
</feature>
<feature type="repeat" description="4-2">
    <location>
        <begin position="1417"/>
        <end position="1425"/>
    </location>
</feature>
<feature type="repeat" description="4-3">
    <location>
        <begin position="1426"/>
        <end position="1434"/>
    </location>
</feature>
<feature type="region of interest" description="Sugar recognition">
    <location>
        <begin position="197"/>
        <end position="240"/>
    </location>
</feature>
<feature type="region of interest" description="18 X 45 AA approximate tandem repeats, Thr-rich">
    <location>
        <begin position="278"/>
        <end position="1087"/>
    </location>
</feature>
<feature type="region of interest" description="Disordered" evidence="3">
    <location>
        <begin position="770"/>
        <end position="799"/>
    </location>
</feature>
<feature type="region of interest" description="Disordered" evidence="3">
    <location>
        <begin position="860"/>
        <end position="889"/>
    </location>
</feature>
<feature type="region of interest" description="Disordered" evidence="3">
    <location>
        <begin position="995"/>
        <end position="1024"/>
    </location>
</feature>
<feature type="region of interest" description="2 X 20 AA approximate tandem repeats, Ser/Thr-rich">
    <location>
        <begin position="1118"/>
        <end position="1157"/>
    </location>
</feature>
<feature type="region of interest" description="Disordered" evidence="3">
    <location>
        <begin position="1161"/>
        <end position="1232"/>
    </location>
</feature>
<feature type="region of interest" description="3 X 51 AA approximate repeats, Ser/Thr-rich">
    <location>
        <begin position="1226"/>
        <end position="1392"/>
    </location>
</feature>
<feature type="region of interest" description="Disordered" evidence="3">
    <location>
        <begin position="1392"/>
        <end position="1414"/>
    </location>
</feature>
<feature type="region of interest" description="3 X 9 AA approximate tandem repeats, Thr-rich">
    <location>
        <begin position="1408"/>
        <end position="1434"/>
    </location>
</feature>
<feature type="region of interest" description="Disordered" evidence="3">
    <location>
        <begin position="1468"/>
        <end position="1497"/>
    </location>
</feature>
<feature type="compositionally biased region" description="Low complexity" evidence="3">
    <location>
        <begin position="773"/>
        <end position="795"/>
    </location>
</feature>
<feature type="compositionally biased region" description="Low complexity" evidence="3">
    <location>
        <begin position="863"/>
        <end position="885"/>
    </location>
</feature>
<feature type="compositionally biased region" description="Low complexity" evidence="3">
    <location>
        <begin position="998"/>
        <end position="1020"/>
    </location>
</feature>
<feature type="compositionally biased region" description="Low complexity" evidence="3">
    <location>
        <begin position="1161"/>
        <end position="1220"/>
    </location>
</feature>
<feature type="compositionally biased region" description="Polar residues" evidence="3">
    <location>
        <begin position="1222"/>
        <end position="1232"/>
    </location>
</feature>
<feature type="compositionally biased region" description="Polar residues" evidence="3">
    <location>
        <begin position="1392"/>
        <end position="1404"/>
    </location>
</feature>
<feature type="compositionally biased region" description="Low complexity" evidence="3">
    <location>
        <begin position="1405"/>
        <end position="1414"/>
    </location>
</feature>
<feature type="compositionally biased region" description="Polar residues" evidence="3">
    <location>
        <begin position="1472"/>
        <end position="1497"/>
    </location>
</feature>
<feature type="lipid moiety-binding region" description="GPI-anchor amidated glycine" evidence="1">
    <location>
        <position position="1514"/>
    </location>
</feature>
<feature type="glycosylation site" description="N-linked (GlcNAc...) asparagine" evidence="1">
    <location>
        <position position="135"/>
    </location>
</feature>
<feature type="glycosylation site" description="N-linked (GlcNAc...) asparagine" evidence="1">
    <location>
        <position position="187"/>
    </location>
</feature>
<feature type="glycosylation site" description="N-linked (GlcNAc...) asparagine" evidence="1">
    <location>
        <position position="262"/>
    </location>
</feature>
<feature type="glycosylation site" description="N-linked (GlcNAc...) asparagine" evidence="1">
    <location>
        <position position="329"/>
    </location>
</feature>
<feature type="glycosylation site" description="N-linked (GlcNAc...) asparagine" evidence="1">
    <location>
        <position position="374"/>
    </location>
</feature>
<feature type="glycosylation site" description="N-linked (GlcNAc...) asparagine" evidence="1">
    <location>
        <position position="419"/>
    </location>
</feature>
<feature type="glycosylation site" description="N-linked (GlcNAc...) asparagine" evidence="1">
    <location>
        <position position="464"/>
    </location>
</feature>
<feature type="glycosylation site" description="N-linked (GlcNAc...) asparagine" evidence="1">
    <location>
        <position position="509"/>
    </location>
</feature>
<feature type="glycosylation site" description="N-linked (GlcNAc...) asparagine" evidence="1">
    <location>
        <position position="554"/>
    </location>
</feature>
<feature type="glycosylation site" description="N-linked (GlcNAc...) asparagine" evidence="1">
    <location>
        <position position="599"/>
    </location>
</feature>
<feature type="glycosylation site" description="N-linked (GlcNAc...) asparagine" evidence="1">
    <location>
        <position position="644"/>
    </location>
</feature>
<feature type="glycosylation site" description="N-linked (GlcNAc...) asparagine" evidence="1">
    <location>
        <position position="689"/>
    </location>
</feature>
<feature type="glycosylation site" description="N-linked (GlcNAc...) asparagine" evidence="1">
    <location>
        <position position="734"/>
    </location>
</feature>
<feature type="glycosylation site" description="N-linked (GlcNAc...) asparagine" evidence="1">
    <location>
        <position position="1114"/>
    </location>
</feature>
<feature type="sequence variant" description="In strain: S288c / KV295.">
    <location>
        <begin position="303"/>
        <end position="797"/>
    </location>
</feature>
<feature type="sequence variant" description="In strain: S288c / KV333.">
    <location>
        <begin position="317"/>
        <end position="946"/>
    </location>
</feature>
<feature type="sequence variant" description="In strain: S288c / KV291.">
    <location>
        <begin position="317"/>
        <end position="901"/>
    </location>
</feature>
<feature type="sequence conflict" description="In Ref. 4; AAX47297." evidence="10" ref="4">
    <original>S</original>
    <variation>G</variation>
    <location>
        <position position="330"/>
    </location>
</feature>
<feature type="sequence conflict" description="In Ref. 4; AAX47297." evidence="10" ref="4">
    <original>R</original>
    <variation>P</variation>
    <location>
        <position position="349"/>
    </location>
</feature>
<feature type="sequence conflict" description="In Ref. 4; AAX47297." evidence="10" ref="4">
    <original>S</original>
    <variation>G</variation>
    <location>
        <position position="375"/>
    </location>
</feature>
<feature type="sequence conflict" description="In Ref. 4; AAX47297." evidence="10" ref="4">
    <original>L</original>
    <variation>M</variation>
    <location>
        <position position="384"/>
    </location>
</feature>
<feature type="sequence conflict" description="In Ref. 4; AAX47297." evidence="10" ref="4">
    <original>QPWNDTF</original>
    <variation>HHGTTLL</variation>
    <location>
        <begin position="416"/>
        <end position="422"/>
    </location>
</feature>
<feature type="sequence conflict" description="In Ref. 2; CAA55024 and 4; AAX47297." evidence="10" ref="2 4">
    <original>L</original>
    <variation>M</variation>
    <location>
        <position position="429"/>
    </location>
</feature>
<feature type="sequence conflict" description="In Ref. 4; AAX47297." evidence="10" ref="4">
    <original>N</original>
    <variation>K</variation>
    <location>
        <position position="436"/>
    </location>
</feature>
<feature type="sequence conflict" description="In Ref. 2; CAA55024." evidence="10" ref="2">
    <original>N</original>
    <variation>D</variation>
    <location>
        <position position="464"/>
    </location>
</feature>
<feature type="sequence conflict" description="In Ref. 4; AAX47297." evidence="10" ref="4">
    <original>S</original>
    <variation>P</variation>
    <location>
        <position position="469"/>
    </location>
</feature>
<feature type="sequence conflict" description="In Ref. 2; CAA55024." evidence="10" ref="2">
    <original>L</original>
    <variation>M</variation>
    <location>
        <position position="474"/>
    </location>
</feature>
<feature type="sequence conflict" description="In Ref. 2; CAA55024." evidence="10" ref="2">
    <original>I</original>
    <variation>M</variation>
    <location>
        <position position="519"/>
    </location>
</feature>
<feature type="sequence conflict" description="In Ref. 2; CAA55024." evidence="10" ref="2">
    <original>P</original>
    <variation>T</variation>
    <location>
        <position position="550"/>
    </location>
</feature>
<feature type="sequence conflict" description="In Ref. 2; CAA55024." evidence="10" ref="2">
    <original>M</original>
    <variation>L</variation>
    <location>
        <position position="609"/>
    </location>
</feature>
<feature type="sequence conflict" description="In Ref. 2; CAA55024." evidence="10" ref="2">
    <original>I</original>
    <variation>M</variation>
    <location>
        <position position="637"/>
    </location>
</feature>
<feature type="sequence conflict" description="In Ref. 2; CAA55024." evidence="10" ref="2">
    <original>I</original>
    <variation>M</variation>
    <location>
        <position position="699"/>
    </location>
</feature>
<feature type="sequence conflict" description="In Ref. 2; CAA55024." evidence="10" ref="2">
    <original>T</original>
    <variation>N</variation>
    <location>
        <position position="706"/>
    </location>
</feature>
<feature type="sequence conflict" description="In Ref. 2; CAA55024 and 4; AAX47294/AAX47295/AAX47297." evidence="10" ref="2 4">
    <original>H</original>
    <variation>T</variation>
    <location>
        <position position="926"/>
    </location>
</feature>
<feature type="strand" evidence="11">
    <location>
        <begin position="35"/>
        <end position="44"/>
    </location>
</feature>
<feature type="helix" evidence="11">
    <location>
        <begin position="53"/>
        <end position="55"/>
    </location>
</feature>
<feature type="helix" evidence="11">
    <location>
        <begin position="57"/>
        <end position="61"/>
    </location>
</feature>
<feature type="helix" evidence="11">
    <location>
        <begin position="63"/>
        <end position="66"/>
    </location>
</feature>
<feature type="strand" evidence="11">
    <location>
        <begin position="69"/>
        <end position="76"/>
    </location>
</feature>
<feature type="strand" evidence="11">
    <location>
        <begin position="81"/>
        <end position="83"/>
    </location>
</feature>
<feature type="strand" evidence="11">
    <location>
        <begin position="86"/>
        <end position="89"/>
    </location>
</feature>
<feature type="strand" evidence="11">
    <location>
        <begin position="92"/>
        <end position="95"/>
    </location>
</feature>
<feature type="helix" evidence="11">
    <location>
        <begin position="98"/>
        <end position="100"/>
    </location>
</feature>
<feature type="turn" evidence="11">
    <location>
        <begin position="103"/>
        <end position="105"/>
    </location>
</feature>
<feature type="turn" evidence="11">
    <location>
        <begin position="108"/>
        <end position="110"/>
    </location>
</feature>
<feature type="turn" evidence="11">
    <location>
        <begin position="125"/>
        <end position="128"/>
    </location>
</feature>
<feature type="strand" evidence="11">
    <location>
        <begin position="135"/>
        <end position="144"/>
    </location>
</feature>
<feature type="strand" evidence="11">
    <location>
        <begin position="147"/>
        <end position="157"/>
    </location>
</feature>
<feature type="strand" evidence="11">
    <location>
        <begin position="160"/>
        <end position="168"/>
    </location>
</feature>
<feature type="turn" evidence="11">
    <location>
        <begin position="169"/>
        <end position="171"/>
    </location>
</feature>
<feature type="strand" evidence="11">
    <location>
        <begin position="189"/>
        <end position="192"/>
    </location>
</feature>
<feature type="strand" evidence="11">
    <location>
        <begin position="204"/>
        <end position="210"/>
    </location>
</feature>
<feature type="strand" evidence="11">
    <location>
        <begin position="215"/>
        <end position="224"/>
    </location>
</feature>
<feature type="strand" evidence="11">
    <location>
        <begin position="229"/>
        <end position="231"/>
    </location>
</feature>
<feature type="strand" evidence="11">
    <location>
        <begin position="233"/>
        <end position="236"/>
    </location>
</feature>
<feature type="strand" evidence="11">
    <location>
        <begin position="242"/>
        <end position="246"/>
    </location>
</feature>
<feature type="turn" evidence="11">
    <location>
        <begin position="248"/>
        <end position="250"/>
    </location>
</feature>
<feature type="strand" evidence="11">
    <location>
        <begin position="251"/>
        <end position="254"/>
    </location>
</feature>
<feature type="strand" evidence="11">
    <location>
        <begin position="264"/>
        <end position="266"/>
    </location>
</feature>
<feature type="helix" evidence="11">
    <location>
        <begin position="268"/>
        <end position="270"/>
    </location>
</feature>
<proteinExistence type="evidence at protein level"/>
<evidence type="ECO:0000255" key="1"/>
<evidence type="ECO:0000255" key="2">
    <source>
        <dbReference type="PROSITE-ProRule" id="PRU01164"/>
    </source>
</evidence>
<evidence type="ECO:0000256" key="3">
    <source>
        <dbReference type="SAM" id="MobiDB-lite"/>
    </source>
</evidence>
<evidence type="ECO:0000269" key="4">
    <source>
    </source>
</evidence>
<evidence type="ECO:0000269" key="5">
    <source>
    </source>
</evidence>
<evidence type="ECO:0000269" key="6">
    <source>
    </source>
</evidence>
<evidence type="ECO:0000269" key="7">
    <source>
    </source>
</evidence>
<evidence type="ECO:0000269" key="8">
    <source>
    </source>
</evidence>
<evidence type="ECO:0000269" key="9">
    <source ref="15"/>
</evidence>
<evidence type="ECO:0000305" key="10"/>
<evidence type="ECO:0007829" key="11">
    <source>
        <dbReference type="PDB" id="4LHL"/>
    </source>
</evidence>
<reference key="1">
    <citation type="journal article" date="1993" name="Yeast">
        <title>Sequence of the open reading frame of the FLO1 gene from Saccharomyces cerevisiae.</title>
        <authorList>
            <person name="Teunissen A.W.R.H."/>
            <person name="Holub E."/>
            <person name="van der Hucht J."/>
            <person name="van den Berg J.A."/>
            <person name="Steensma H.Y."/>
        </authorList>
    </citation>
    <scope>PRELIMINARY NUCLEOTIDE SEQUENCE [GENOMIC DNA]</scope>
</reference>
<reference key="2">
    <citation type="journal article" date="1995" name="Yeast">
        <title>The Saccharomyces cerevisiae FLO1 flocculation gene encodes for a cell surface protein.</title>
        <authorList>
            <person name="Bidard F."/>
            <person name="Bony M."/>
            <person name="Blondin B."/>
            <person name="Dequin S."/>
            <person name="Barre P."/>
        </authorList>
    </citation>
    <scope>NUCLEOTIDE SEQUENCE [GENOMIC DNA]</scope>
    <scope>SUBCELLULAR LOCATION</scope>
    <scope>REPEATS</scope>
    <source>
        <strain>STX347-1D</strain>
    </source>
</reference>
<reference key="3">
    <citation type="journal article" date="1994" name="Yeast">
        <title>Molecular cloning and analysis of the yeast flocculation gene FLO1.</title>
        <authorList>
            <person name="Watari J."/>
            <person name="Takata Y."/>
            <person name="Ogawa M."/>
            <person name="Sahara H."/>
            <person name="Koshino S."/>
            <person name="Onnela M.-L."/>
            <person name="Airaksinen U."/>
            <person name="Jaatinen R."/>
            <person name="Penttilae M."/>
            <person name="Keraenen S."/>
        </authorList>
    </citation>
    <scope>NUCLEOTIDE SEQUENCE [GENOMIC DNA]</scope>
</reference>
<reference key="4">
    <citation type="journal article" date="2005" name="Nat. Genet.">
        <title>Intragenic tandem repeats generate functional variability.</title>
        <authorList>
            <person name="Verstrepen K.J."/>
            <person name="Jansen A."/>
            <person name="Lewitter F."/>
            <person name="Fink G.R."/>
        </authorList>
    </citation>
    <scope>NUCLEOTIDE SEQUENCE [GENOMIC DNA]</scope>
    <scope>REPEATS</scope>
    <source>
        <strain>S288c / KV1</strain>
        <strain>S288c / KV291</strain>
        <strain>S288c / KV295</strain>
        <strain>S288c / KV333</strain>
    </source>
</reference>
<reference key="5">
    <citation type="journal article" date="2007" name="Mol. Microbiol.">
        <title>Differential Flo8p-dependent regulation of FLO1 and FLO11 for cell-cell and cell-substrate adherence of S.cerevisiae S288c.</title>
        <authorList>
            <person name="Fichtner L."/>
            <person name="Schulze F."/>
            <person name="Braus G.H."/>
        </authorList>
    </citation>
    <scope>NUCLEOTIDE SEQUENCE [GENOMIC DNA]</scope>
    <scope>FUNCTION</scope>
    <source>
        <strain>Sigma 1278B</strain>
    </source>
</reference>
<reference key="6">
    <citation type="journal article" date="1995" name="Proc. Natl. Acad. Sci. U.S.A.">
        <title>The nucleotide sequence of chromosome I from Saccharomyces cerevisiae.</title>
        <authorList>
            <person name="Bussey H."/>
            <person name="Kaback D.B."/>
            <person name="Zhong W.-W."/>
            <person name="Vo D.H."/>
            <person name="Clark M.W."/>
            <person name="Fortin N."/>
            <person name="Hall J."/>
            <person name="Ouellette B.F.F."/>
            <person name="Keng T."/>
            <person name="Barton A.B."/>
            <person name="Su Y."/>
            <person name="Davies C.J."/>
            <person name="Storms R.K."/>
        </authorList>
    </citation>
    <scope>NUCLEOTIDE SEQUENCE [LARGE SCALE GENOMIC DNA]</scope>
    <source>
        <strain>ATCC 204508 / S288c</strain>
    </source>
</reference>
<reference key="7">
    <citation type="journal article" date="2014" name="G3 (Bethesda)">
        <title>The reference genome sequence of Saccharomyces cerevisiae: Then and now.</title>
        <authorList>
            <person name="Engel S.R."/>
            <person name="Dietrich F.S."/>
            <person name="Fisk D.G."/>
            <person name="Binkley G."/>
            <person name="Balakrishnan R."/>
            <person name="Costanzo M.C."/>
            <person name="Dwight S.S."/>
            <person name="Hitz B.C."/>
            <person name="Karra K."/>
            <person name="Nash R.S."/>
            <person name="Weng S."/>
            <person name="Wong E.D."/>
            <person name="Lloyd P."/>
            <person name="Skrzypek M.S."/>
            <person name="Miyasato S.R."/>
            <person name="Simison M."/>
            <person name="Cherry J.M."/>
        </authorList>
    </citation>
    <scope>GENOME REANNOTATION</scope>
    <source>
        <strain>ATCC 204508 / S288c</strain>
    </source>
</reference>
<reference key="8">
    <citation type="journal article" date="1995" name="Yeast">
        <title>Localization of the dominant flocculation genes FLO5 and FLO8 of Saccharomyces cerevisiae.</title>
        <authorList>
            <person name="Teunissen A.W.R.H."/>
            <person name="van den Berg J.A."/>
            <person name="Steensma H.Y."/>
        </authorList>
    </citation>
    <scope>GENE MAPPING</scope>
</reference>
<reference key="9">
    <citation type="journal article" date="1995" name="Yeast">
        <title>Review: the dominant flocculation genes of Saccharomyces cerevisiae constitute a new subtelomeric gene family.</title>
        <authorList>
            <person name="Teunissen A.W.R.H."/>
            <person name="Steensma H.Y."/>
        </authorList>
    </citation>
    <scope>REVIEW</scope>
</reference>
<reference key="10">
    <citation type="journal article" date="1996" name="Biochim. Biophys. Acta">
        <title>The retention mechanism of cell wall proteins in Saccharomyces cerevisiae. Wall-bound Cwp2p is beta-1,6-glucosylated.</title>
        <authorList>
            <person name="van der Vaart J.M."/>
            <person name="van Schagen F.S."/>
            <person name="Mooren A.T.A."/>
            <person name="Chapman J.W."/>
            <person name="Klis F.M."/>
            <person name="Verrips C.T."/>
        </authorList>
    </citation>
    <scope>SUBCELLULAR LOCATION</scope>
</reference>
<reference key="11">
    <citation type="journal article" date="1997" name="J. Bacteriol.">
        <title>Localization and cell surface anchoring of the Saccharomyces cerevisiae flocculation protein Flo1p.</title>
        <authorList>
            <person name="Bony M."/>
            <person name="Thines-Sempoux D."/>
            <person name="Barre P."/>
            <person name="Blondin B."/>
        </authorList>
    </citation>
    <scope>SUBCELLULAR LOCATION</scope>
</reference>
<reference key="12">
    <citation type="journal article" date="1998" name="J. Bacteriol.">
        <title>Region of FLO1 proteins responsible for sugar recognition.</title>
        <authorList>
            <person name="Kobayashi O."/>
            <person name="Hayashi N."/>
            <person name="Kuroki R."/>
            <person name="Sone H."/>
        </authorList>
    </citation>
    <scope>FUNCTION</scope>
</reference>
<reference key="13">
    <citation type="journal article" date="1998" name="Yeast">
        <title>Distribution of the flocculation protein, flop, at the cell surface during yeast growth: the availability of flop determines the flocculation level.</title>
        <authorList>
            <person name="Bony M."/>
            <person name="Barre P."/>
            <person name="Blondin B."/>
        </authorList>
    </citation>
    <scope>FUNCTION</scope>
    <scope>SUBCELLULAR LOCATION</scope>
</reference>
<reference key="14">
    <citation type="journal article" date="2000" name="Proc. Natl. Acad. Sci. U.S.A.">
        <title>A Saccharomyces gene family involved in invasive growth, cell-cell adhesion, and mating.</title>
        <authorList>
            <person name="Guo B."/>
            <person name="Styles C.A."/>
            <person name="Feng Q."/>
            <person name="Fink G.R."/>
        </authorList>
    </citation>
    <scope>FUNCTION</scope>
</reference>
<reference key="15">
    <citation type="journal article" date="2001" name="J. Am. Soc. Brew. Chem.">
        <title>Late fermentation expression of FLO1 in Saccharomyces cerevisiae.</title>
        <authorList>
            <person name="Verstrepen K.J."/>
            <person name="Michiels C."/>
            <person name="Derdelinckx G."/>
            <person name="Delvaux F.R."/>
            <person name="Winderickx J."/>
            <person name="Thevelein J.M."/>
            <person name="Bauer F.F."/>
            <person name="Pretorius I.S."/>
        </authorList>
    </citation>
    <scope>BIOTECHNOLOGY</scope>
</reference>
<reference key="16">
    <citation type="journal article" date="2003" name="Appl. Microbiol. Biotechnol.">
        <title>Yeast flocculation: what brewers should know.</title>
        <authorList>
            <person name="Verstrepen K.J."/>
            <person name="Derdelinckx G."/>
            <person name="Verachtert H."/>
            <person name="Delvaux F.R."/>
        </authorList>
    </citation>
    <scope>BIOTECHNOLOGY</scope>
</reference>
<reference key="17">
    <citation type="journal article" date="2004" name="Microbiology">
        <title>Multiple sequence signals determine the distribution of glycosylphosphatidylinositol proteins between the plasma membrane and cell wall in Saccharomyces cerevisiae.</title>
        <authorList>
            <person name="Frieman M.B."/>
            <person name="Cormack B.P."/>
        </authorList>
    </citation>
    <scope>SUBCELLULAR LOCATION</scope>
    <scope>REPEATS</scope>
</reference>
<gene>
    <name type="primary">FLO1</name>
    <name type="synonym">FLO2</name>
    <name type="synonym">FLO4</name>
    <name type="synonym">FLO8</name>
    <name type="ordered locus">YAR050W</name>
</gene>
<protein>
    <recommendedName>
        <fullName>Flocculation protein FLO1</fullName>
        <shortName>Flocculin-1</shortName>
    </recommendedName>
</protein>
<comment type="function">
    <text evidence="4 6 7 8">Cell wall protein that participates directly in adhesive cell-cell interactions during yeast flocculation, a reversible, asexual and Ca(2+)-dependent process in which cells adhere to form aggregates (flocs) consisting of thousands of cells. The lectin-like protein sticks out of the cell wall of flocculent cells and selectively binds mannose residues in the cell walls of adjacent cells. Activity is inhibited by mannose, but not by glucose, maltose, sucrose or galactose. Also involved in cell-substrate adhesion.</text>
</comment>
<comment type="subcellular location">
    <subcellularLocation>
        <location>Cell membrane</location>
        <topology>Lipid-anchor</topology>
        <topology>GPI-anchor</topology>
    </subcellularLocation>
    <subcellularLocation>
        <location>Secreted</location>
        <location>Cell wall</location>
    </subcellularLocation>
    <text>Identified as GPI-anchored plasma membrane protein (GPI-PMP) as well as covalently-linked GPI-modified cell wall protein (GPI-CWP) in the outer cell wall layer.</text>
</comment>
<comment type="domain">
    <text>The number of the intragenic tandem repeats varies between different S.cerevisiae strains. There is a linear correlation between protein size and the extend of adhesion: the more repeats, the stronger the adhesion properties and the greater the fraction of flocculating cells. The Ser/Thr-rich repeats are also important for proper cell wall targeting of the protein.</text>
</comment>
<comment type="PTM">
    <text evidence="10">Extensively N- and O-glycosylated.</text>
</comment>
<comment type="PTM">
    <text>The GPI-anchor is attached to the protein in the endoplasmic reticulum and serves to target the protein to the cell surface. There, the glucosamine-inositol phospholipid moiety is cleaved off and the GPI-modified mannoprotein is covalently attached via its lipidless GPI glycan remnant to the 1,6-beta-glucan of the outer cell wall layer.</text>
</comment>
<comment type="biotechnology">
    <text evidence="5 9">For many industrial applications in which the yeast S.cerevisiae is used, e.g. beer, wine and alcohol production, appropriate flocculation behavior is one of the most important characteristics of a good production strain. The ability of yeast cells to flocculate is of considerable importance, as it provides an effective, environment-friendly, simple and cost-free way to separate yeast cells from the fermentation product at the end of fermentation.</text>
</comment>
<comment type="similarity">
    <text evidence="10">Belongs to the flocculin family.</text>
</comment>